<feature type="transit peptide" description="Mitochondrion" evidence="2">
    <location>
        <begin position="1"/>
        <end position="56"/>
    </location>
</feature>
<feature type="chain" id="PRO_0000030678" description="Cytochrome b-c1 complex subunit Rieske-3, mitochondrial">
    <location>
        <begin position="57"/>
        <end position="268"/>
    </location>
</feature>
<feature type="topological domain" description="Mitochondrial matrix" evidence="4">
    <location>
        <begin position="57"/>
        <end position="105"/>
    </location>
</feature>
<feature type="transmembrane region" description="Helical" evidence="2">
    <location>
        <begin position="106"/>
        <end position="128"/>
    </location>
</feature>
<feature type="topological domain" description="Mitochondrial intermembrane" evidence="4">
    <location>
        <begin position="129"/>
        <end position="268"/>
    </location>
</feature>
<feature type="domain" description="Rieske" evidence="3">
    <location>
        <begin position="178"/>
        <end position="266"/>
    </location>
</feature>
<feature type="binding site" evidence="3">
    <location>
        <position position="211"/>
    </location>
    <ligand>
        <name>[2Fe-2S] cluster</name>
        <dbReference type="ChEBI" id="CHEBI:190135"/>
    </ligand>
</feature>
<feature type="binding site" evidence="3">
    <location>
        <position position="213"/>
    </location>
    <ligand>
        <name>[2Fe-2S] cluster</name>
        <dbReference type="ChEBI" id="CHEBI:190135"/>
    </ligand>
</feature>
<feature type="binding site" evidence="3">
    <location>
        <position position="230"/>
    </location>
    <ligand>
        <name>[2Fe-2S] cluster</name>
        <dbReference type="ChEBI" id="CHEBI:190135"/>
    </ligand>
</feature>
<feature type="binding site" evidence="3">
    <location>
        <position position="233"/>
    </location>
    <ligand>
        <name>[2Fe-2S] cluster</name>
        <dbReference type="ChEBI" id="CHEBI:190135"/>
    </ligand>
</feature>
<feature type="disulfide bond" evidence="3">
    <location>
        <begin position="216"/>
        <end position="232"/>
    </location>
</feature>
<keyword id="KW-0001">2Fe-2S</keyword>
<keyword id="KW-1015">Disulfide bond</keyword>
<keyword id="KW-0249">Electron transport</keyword>
<keyword id="KW-0408">Iron</keyword>
<keyword id="KW-0411">Iron-sulfur</keyword>
<keyword id="KW-0472">Membrane</keyword>
<keyword id="KW-0479">Metal-binding</keyword>
<keyword id="KW-0496">Mitochondrion</keyword>
<keyword id="KW-0999">Mitochondrion inner membrane</keyword>
<keyword id="KW-1185">Reference proteome</keyword>
<keyword id="KW-0679">Respiratory chain</keyword>
<keyword id="KW-0809">Transit peptide</keyword>
<keyword id="KW-1278">Translocase</keyword>
<keyword id="KW-0812">Transmembrane</keyword>
<keyword id="KW-1133">Transmembrane helix</keyword>
<keyword id="KW-0813">Transport</keyword>
<comment type="function">
    <text evidence="1">Component of the ubiquinol-cytochrome c oxidoreductase, a multisubunit transmembrane complex that is part of the mitochondrial electron transport chain which drives oxidative phosphorylation. The respiratory chain contains 3 multisubunit complexes succinate dehydrogenase (complex II, CII), ubiquinol-cytochrome c oxidoreductase (cytochrome b-c1 complex, complex III, CIII) and cytochrome c oxidase (complex IV, CIV), that cooperate to transfer electrons derived from NADH and succinate to molecular oxygen, creating an electrochemical gradient over the inner membrane that drives transmembrane transport and the ATP synthase. The cytochrome b-c1 complex catalyzes electron transfer from ubiquinol to cytochrome c, linking this redox reaction to translocation of protons across the mitochondrial inner membrane, with protons being carried across the membrane as hydrogens on the quinol. In the process called Q cycle, 2 protons are consumed from the matrix, 4 protons are released into the intermembrane space and 2 electrons are passed to cytochrome c. The Rieske protein is a catalytic core subunit containing a [2Fe-2S] iron-sulfur cluster. It cycles between 2 conformational states during catalysis to transfer electrons from the quinol bound in the Q(0) site in cytochrome b to cytochrome c1.</text>
</comment>
<comment type="catalytic activity">
    <reaction evidence="1">
        <text>a quinol + 2 Fe(III)-[cytochrome c](out) = a quinone + 2 Fe(II)-[cytochrome c](out) + 2 H(+)(out)</text>
        <dbReference type="Rhea" id="RHEA:11484"/>
        <dbReference type="Rhea" id="RHEA-COMP:10350"/>
        <dbReference type="Rhea" id="RHEA-COMP:14399"/>
        <dbReference type="ChEBI" id="CHEBI:15378"/>
        <dbReference type="ChEBI" id="CHEBI:24646"/>
        <dbReference type="ChEBI" id="CHEBI:29033"/>
        <dbReference type="ChEBI" id="CHEBI:29034"/>
        <dbReference type="ChEBI" id="CHEBI:132124"/>
        <dbReference type="EC" id="7.1.1.8"/>
    </reaction>
</comment>
<comment type="cofactor">
    <cofactor evidence="3">
        <name>[2Fe-2S] cluster</name>
        <dbReference type="ChEBI" id="CHEBI:190135"/>
    </cofactor>
    <text evidence="3">Binds 1 [2Fe-2S] cluster per subunit.</text>
</comment>
<comment type="subunit">
    <text evidence="1">Component of the ubiquinol-cytochrome c oxidoreductase (cytochrome b-c1 complex, complex III, CIII), a multisubunit enzyme composed of 3 respiratory subunits cytochrome b, cytochrome c1 and Rieske protein, 2 core protein subunits, and several low-molecular weight protein subunits. The complex exists as an obligatory dimer and forms supercomplexes (SCs) in the inner mitochondrial membrane with cytochrome c oxidase (complex IV, CIV).</text>
</comment>
<comment type="subcellular location">
    <subcellularLocation>
        <location evidence="1">Mitochondrion inner membrane</location>
        <topology evidence="1">Single-pass membrane protein</topology>
    </subcellularLocation>
</comment>
<comment type="tissue specificity">
    <text>High levels are seen in the flowers while a low level expression is seen in the roots, leaves and stems.</text>
</comment>
<comment type="miscellaneous">
    <text>The Rieske protein is a high potential 2Fe-2S protein.</text>
</comment>
<comment type="similarity">
    <text evidence="4">Belongs to the Rieske iron-sulfur protein family.</text>
</comment>
<name>UCRI3_TOBAC</name>
<sequence>MLRIAGRKLSSSAATRSSSAFFTRNPFTFTDDSSSPARSPSPASLASQFLDQFRGFSSNSVSPAHQTGLVSDLPATVAAIKNPSSKIVYDDSNHERYPPGDPSKRAFAYFVLTGGRFVYASLVRLLILKFVLSMSASKDVLALASLEVDLSSIEPGTTVTVKWRGKPVFIRRRTEEDINLANSVDLGSLRDPQQDAERVKNPEWLVVIGVCTHLGCIPLPNAGDFGGWFCPCHGSHYDISGRIRKGPAPYNLEVPTYSFMEENKLLIG</sequence>
<dbReference type="EC" id="7.1.1.8"/>
<dbReference type="EMBL" id="L16811">
    <property type="protein sequence ID" value="AAA20832.1"/>
    <property type="molecule type" value="mRNA"/>
</dbReference>
<dbReference type="PIR" id="T02025">
    <property type="entry name" value="T02025"/>
</dbReference>
<dbReference type="RefSeq" id="NP_001312180.1">
    <property type="nucleotide sequence ID" value="NM_001325251.1"/>
</dbReference>
<dbReference type="SMR" id="P51133"/>
<dbReference type="STRING" id="4097.P51133"/>
<dbReference type="PaxDb" id="4097-P51133"/>
<dbReference type="GeneID" id="107777879"/>
<dbReference type="KEGG" id="nta:107777879"/>
<dbReference type="OMA" id="SAHNHER"/>
<dbReference type="OrthoDB" id="1637982at2759"/>
<dbReference type="PhylomeDB" id="P51133"/>
<dbReference type="Proteomes" id="UP000084051">
    <property type="component" value="Unplaced"/>
</dbReference>
<dbReference type="GO" id="GO:0005743">
    <property type="term" value="C:mitochondrial inner membrane"/>
    <property type="evidence" value="ECO:0007669"/>
    <property type="project" value="UniProtKB-SubCell"/>
</dbReference>
<dbReference type="GO" id="GO:0045275">
    <property type="term" value="C:respiratory chain complex III"/>
    <property type="evidence" value="ECO:0000318"/>
    <property type="project" value="GO_Central"/>
</dbReference>
<dbReference type="GO" id="GO:0051537">
    <property type="term" value="F:2 iron, 2 sulfur cluster binding"/>
    <property type="evidence" value="ECO:0007669"/>
    <property type="project" value="UniProtKB-KW"/>
</dbReference>
<dbReference type="GO" id="GO:0046872">
    <property type="term" value="F:metal ion binding"/>
    <property type="evidence" value="ECO:0007669"/>
    <property type="project" value="UniProtKB-KW"/>
</dbReference>
<dbReference type="GO" id="GO:0016491">
    <property type="term" value="F:oxidoreductase activity"/>
    <property type="evidence" value="ECO:0000318"/>
    <property type="project" value="GO_Central"/>
</dbReference>
<dbReference type="GO" id="GO:0008121">
    <property type="term" value="F:ubiquinol-cytochrome-c reductase activity"/>
    <property type="evidence" value="ECO:0007669"/>
    <property type="project" value="UniProtKB-EC"/>
</dbReference>
<dbReference type="GO" id="GO:0006122">
    <property type="term" value="P:mitochondrial electron transport, ubiquinol to cytochrome c"/>
    <property type="evidence" value="ECO:0000318"/>
    <property type="project" value="GO_Central"/>
</dbReference>
<dbReference type="CDD" id="cd03470">
    <property type="entry name" value="Rieske_cytochrome_bc1"/>
    <property type="match status" value="1"/>
</dbReference>
<dbReference type="FunFam" id="2.102.10.10:FF:000001">
    <property type="entry name" value="Cytochrome b-c1 complex subunit Rieske, mitochondrial"/>
    <property type="match status" value="1"/>
</dbReference>
<dbReference type="Gene3D" id="2.102.10.10">
    <property type="entry name" value="Rieske [2Fe-2S] iron-sulphur domain"/>
    <property type="match status" value="1"/>
</dbReference>
<dbReference type="InterPro" id="IPR017941">
    <property type="entry name" value="Rieske_2Fe-2S"/>
</dbReference>
<dbReference type="InterPro" id="IPR036922">
    <property type="entry name" value="Rieske_2Fe-2S_sf"/>
</dbReference>
<dbReference type="InterPro" id="IPR014349">
    <property type="entry name" value="Rieske_Fe-S_prot"/>
</dbReference>
<dbReference type="InterPro" id="IPR005805">
    <property type="entry name" value="Rieske_Fe-S_prot_C"/>
</dbReference>
<dbReference type="InterPro" id="IPR004192">
    <property type="entry name" value="Rieske_TM"/>
</dbReference>
<dbReference type="InterPro" id="IPR006317">
    <property type="entry name" value="Ubiquinol_cyt_c_Rdtase_Fe-S-su"/>
</dbReference>
<dbReference type="NCBIfam" id="TIGR01416">
    <property type="entry name" value="Rieske_proteo"/>
    <property type="match status" value="1"/>
</dbReference>
<dbReference type="PANTHER" id="PTHR10134">
    <property type="entry name" value="CYTOCHROME B-C1 COMPLEX SUBUNIT RIESKE, MITOCHONDRIAL"/>
    <property type="match status" value="1"/>
</dbReference>
<dbReference type="Pfam" id="PF00355">
    <property type="entry name" value="Rieske"/>
    <property type="match status" value="1"/>
</dbReference>
<dbReference type="Pfam" id="PF02921">
    <property type="entry name" value="UCR_TM"/>
    <property type="match status" value="1"/>
</dbReference>
<dbReference type="PRINTS" id="PR00162">
    <property type="entry name" value="RIESKE"/>
</dbReference>
<dbReference type="SUPFAM" id="SSF50022">
    <property type="entry name" value="ISP domain"/>
    <property type="match status" value="1"/>
</dbReference>
<dbReference type="SUPFAM" id="SSF81502">
    <property type="entry name" value="ISP transmembrane anchor"/>
    <property type="match status" value="1"/>
</dbReference>
<dbReference type="PROSITE" id="PS51296">
    <property type="entry name" value="RIESKE"/>
    <property type="match status" value="1"/>
</dbReference>
<accession>P51133</accession>
<organism>
    <name type="scientific">Nicotiana tabacum</name>
    <name type="common">Common tobacco</name>
    <dbReference type="NCBI Taxonomy" id="4097"/>
    <lineage>
        <taxon>Eukaryota</taxon>
        <taxon>Viridiplantae</taxon>
        <taxon>Streptophyta</taxon>
        <taxon>Embryophyta</taxon>
        <taxon>Tracheophyta</taxon>
        <taxon>Spermatophyta</taxon>
        <taxon>Magnoliopsida</taxon>
        <taxon>eudicotyledons</taxon>
        <taxon>Gunneridae</taxon>
        <taxon>Pentapetalae</taxon>
        <taxon>asterids</taxon>
        <taxon>lamiids</taxon>
        <taxon>Solanales</taxon>
        <taxon>Solanaceae</taxon>
        <taxon>Nicotianoideae</taxon>
        <taxon>Nicotianeae</taxon>
        <taxon>Nicotiana</taxon>
    </lineage>
</organism>
<protein>
    <recommendedName>
        <fullName>Cytochrome b-c1 complex subunit Rieske-3, mitochondrial</fullName>
        <ecNumber>7.1.1.8</ecNumber>
    </recommendedName>
    <alternativeName>
        <fullName>Complex III subunit 5-3</fullName>
    </alternativeName>
    <alternativeName>
        <fullName>Rieske iron-sulfur protein 3</fullName>
        <shortName>RISP3</shortName>
    </alternativeName>
    <alternativeName>
        <fullName>Ubiquinol-cytochrome c reductase iron-sulfur subunit 3</fullName>
    </alternativeName>
</protein>
<evidence type="ECO:0000250" key="1">
    <source>
        <dbReference type="UniProtKB" id="P08067"/>
    </source>
</evidence>
<evidence type="ECO:0000255" key="2"/>
<evidence type="ECO:0000255" key="3">
    <source>
        <dbReference type="PROSITE-ProRule" id="PRU00628"/>
    </source>
</evidence>
<evidence type="ECO:0000305" key="4"/>
<reference key="1">
    <citation type="journal article" date="1994" name="Plant Cell">
        <title>Flower-enhanced expression of a nuclear-encoded mitochondrial respiratory protein is associated with changes in mitochondrion number.</title>
        <authorList>
            <person name="Huang J."/>
            <person name="Struck F."/>
            <person name="Matzinger D.F."/>
            <person name="Levings C.S. III"/>
        </authorList>
    </citation>
    <scope>NUCLEOTIDE SEQUENCE [MRNA]</scope>
    <source>
        <strain>cv. SC58</strain>
        <tissue>Flower</tissue>
    </source>
</reference>
<proteinExistence type="evidence at transcript level"/>